<keyword id="KW-0903">Direct protein sequencing</keyword>
<keyword id="KW-0274">FAD</keyword>
<keyword id="KW-0285">Flavoprotein</keyword>
<keyword id="KW-0325">Glycoprotein</keyword>
<keyword id="KW-0458">Lysosome</keyword>
<keyword id="KW-0560">Oxidoreductase</keyword>
<keyword id="KW-1185">Reference proteome</keyword>
<keyword id="KW-0732">Signal</keyword>
<proteinExistence type="evidence at protein level"/>
<dbReference type="EC" id="1.8.3.5" evidence="2"/>
<dbReference type="EMBL" id="AK004799">
    <property type="protein sequence ID" value="BAB23572.1"/>
    <property type="molecule type" value="mRNA"/>
</dbReference>
<dbReference type="EMBL" id="AK004840">
    <property type="protein sequence ID" value="BAB23607.1"/>
    <property type="molecule type" value="mRNA"/>
</dbReference>
<dbReference type="EMBL" id="AK031585">
    <property type="protein sequence ID" value="BAC27462.1"/>
    <property type="molecule type" value="mRNA"/>
</dbReference>
<dbReference type="EMBL" id="AK033373">
    <property type="protein sequence ID" value="BAC28252.1"/>
    <property type="molecule type" value="mRNA"/>
</dbReference>
<dbReference type="EMBL" id="AK049412">
    <property type="protein sequence ID" value="BAC33741.1"/>
    <property type="molecule type" value="mRNA"/>
</dbReference>
<dbReference type="EMBL" id="AK145366">
    <property type="protein sequence ID" value="BAE26391.1"/>
    <property type="molecule type" value="mRNA"/>
</dbReference>
<dbReference type="EMBL" id="AK147190">
    <property type="protein sequence ID" value="BAE27750.1"/>
    <property type="molecule type" value="mRNA"/>
</dbReference>
<dbReference type="EMBL" id="AK161616">
    <property type="protein sequence ID" value="BAE36494.1"/>
    <property type="molecule type" value="mRNA"/>
</dbReference>
<dbReference type="EMBL" id="AK169209">
    <property type="protein sequence ID" value="BAE40981.1"/>
    <property type="molecule type" value="mRNA"/>
</dbReference>
<dbReference type="EMBL" id="BC028308">
    <property type="protein sequence ID" value="AAH28308.1"/>
    <property type="molecule type" value="mRNA"/>
</dbReference>
<dbReference type="EMBL" id="AK173058">
    <property type="protein sequence ID" value="BAD32336.1"/>
    <property type="molecule type" value="mRNA"/>
</dbReference>
<dbReference type="CCDS" id="CCDS20311.1"/>
<dbReference type="RefSeq" id="NP_080099.1">
    <property type="nucleotide sequence ID" value="NM_025823.4"/>
</dbReference>
<dbReference type="SMR" id="Q9CQF9"/>
<dbReference type="BioGRID" id="211785">
    <property type="interactions" value="5"/>
</dbReference>
<dbReference type="FunCoup" id="Q9CQF9">
    <property type="interactions" value="1420"/>
</dbReference>
<dbReference type="STRING" id="10090.ENSMUSP00000032065"/>
<dbReference type="GlyConnect" id="2601">
    <property type="glycosylation" value="13 N-Linked glycans (3 sites)"/>
</dbReference>
<dbReference type="GlyCosmos" id="Q9CQF9">
    <property type="glycosylation" value="3 sites, 12 glycans"/>
</dbReference>
<dbReference type="GlyGen" id="Q9CQF9">
    <property type="glycosylation" value="5 sites, 13 N-linked glycans (3 sites), 1 O-linked glycan (1 site)"/>
</dbReference>
<dbReference type="iPTMnet" id="Q9CQF9"/>
<dbReference type="PhosphoSitePlus" id="Q9CQF9"/>
<dbReference type="SwissPalm" id="Q9CQF9"/>
<dbReference type="CPTAC" id="non-CPTAC-3593"/>
<dbReference type="jPOST" id="Q9CQF9"/>
<dbReference type="PaxDb" id="10090-ENSMUSP00000032065"/>
<dbReference type="PeptideAtlas" id="Q9CQF9"/>
<dbReference type="ProteomicsDB" id="287896"/>
<dbReference type="Pumba" id="Q9CQF9"/>
<dbReference type="Antibodypedia" id="16314">
    <property type="antibodies" value="91 antibodies from 25 providers"/>
</dbReference>
<dbReference type="DNASU" id="66881"/>
<dbReference type="Ensembl" id="ENSMUST00000032065.15">
    <property type="protein sequence ID" value="ENSMUSP00000032065.9"/>
    <property type="gene ID" value="ENSMUSG00000029998.15"/>
</dbReference>
<dbReference type="GeneID" id="66881"/>
<dbReference type="KEGG" id="mmu:66881"/>
<dbReference type="UCSC" id="uc009cro.2">
    <property type="organism name" value="mouse"/>
</dbReference>
<dbReference type="AGR" id="MGI:1914131"/>
<dbReference type="CTD" id="51449"/>
<dbReference type="MGI" id="MGI:1914131">
    <property type="gene designation" value="Pcyox1"/>
</dbReference>
<dbReference type="VEuPathDB" id="HostDB:ENSMUSG00000029998"/>
<dbReference type="eggNOG" id="ENOG502QSHJ">
    <property type="taxonomic scope" value="Eukaryota"/>
</dbReference>
<dbReference type="GeneTree" id="ENSGT00390000011206"/>
<dbReference type="HOGENOM" id="CLU_021176_1_0_1"/>
<dbReference type="InParanoid" id="Q9CQF9"/>
<dbReference type="OMA" id="SIGIWDG"/>
<dbReference type="OrthoDB" id="437369at2759"/>
<dbReference type="PhylomeDB" id="Q9CQF9"/>
<dbReference type="TreeFam" id="TF329001"/>
<dbReference type="BRENDA" id="1.8.3.5">
    <property type="organism ID" value="3474"/>
</dbReference>
<dbReference type="BioGRID-ORCS" id="66881">
    <property type="hits" value="3 hits in 80 CRISPR screens"/>
</dbReference>
<dbReference type="ChiTaRS" id="Pcyox1">
    <property type="organism name" value="mouse"/>
</dbReference>
<dbReference type="PRO" id="PR:Q9CQF9"/>
<dbReference type="Proteomes" id="UP000000589">
    <property type="component" value="Chromosome 6"/>
</dbReference>
<dbReference type="RNAct" id="Q9CQF9">
    <property type="molecule type" value="protein"/>
</dbReference>
<dbReference type="Bgee" id="ENSMUSG00000029998">
    <property type="expression patterns" value="Expressed in metanephric cortical collecting duct and 269 other cell types or tissues"/>
</dbReference>
<dbReference type="ExpressionAtlas" id="Q9CQF9">
    <property type="expression patterns" value="baseline and differential"/>
</dbReference>
<dbReference type="GO" id="GO:0005764">
    <property type="term" value="C:lysosome"/>
    <property type="evidence" value="ECO:0000314"/>
    <property type="project" value="MGI"/>
</dbReference>
<dbReference type="GO" id="GO:0034361">
    <property type="term" value="C:very-low-density lipoprotein particle"/>
    <property type="evidence" value="ECO:0007669"/>
    <property type="project" value="Ensembl"/>
</dbReference>
<dbReference type="GO" id="GO:0071949">
    <property type="term" value="F:FAD binding"/>
    <property type="evidence" value="ECO:0007669"/>
    <property type="project" value="Ensembl"/>
</dbReference>
<dbReference type="GO" id="GO:0102149">
    <property type="term" value="F:farnesylcysteine lyase activity"/>
    <property type="evidence" value="ECO:0007669"/>
    <property type="project" value="RHEA"/>
</dbReference>
<dbReference type="GO" id="GO:0001735">
    <property type="term" value="F:prenylcysteine oxidase activity"/>
    <property type="evidence" value="ECO:0000315"/>
    <property type="project" value="MGI"/>
</dbReference>
<dbReference type="GO" id="GO:0030327">
    <property type="term" value="P:prenylated protein catabolic process"/>
    <property type="evidence" value="ECO:0007669"/>
    <property type="project" value="Ensembl"/>
</dbReference>
<dbReference type="GO" id="GO:0030328">
    <property type="term" value="P:prenylcysteine catabolic process"/>
    <property type="evidence" value="ECO:0000315"/>
    <property type="project" value="MGI"/>
</dbReference>
<dbReference type="FunFam" id="3.50.50.60:FF:000081">
    <property type="entry name" value="prenylcysteine oxidase 1"/>
    <property type="match status" value="1"/>
</dbReference>
<dbReference type="Gene3D" id="3.50.50.60">
    <property type="entry name" value="FAD/NAD(P)-binding domain"/>
    <property type="match status" value="1"/>
</dbReference>
<dbReference type="InterPro" id="IPR036188">
    <property type="entry name" value="FAD/NAD-bd_sf"/>
</dbReference>
<dbReference type="InterPro" id="IPR010795">
    <property type="entry name" value="Prenylcys_lyase"/>
</dbReference>
<dbReference type="InterPro" id="IPR017046">
    <property type="entry name" value="Prenylcysteine_Oxase1"/>
</dbReference>
<dbReference type="PANTHER" id="PTHR15944">
    <property type="entry name" value="FARNESYLCYSTEINE LYASE"/>
    <property type="match status" value="1"/>
</dbReference>
<dbReference type="PANTHER" id="PTHR15944:SF3">
    <property type="entry name" value="PRENYLCYSTEINE OXIDASE 1"/>
    <property type="match status" value="1"/>
</dbReference>
<dbReference type="Pfam" id="PF13450">
    <property type="entry name" value="NAD_binding_8"/>
    <property type="match status" value="1"/>
</dbReference>
<dbReference type="Pfam" id="PF07156">
    <property type="entry name" value="Prenylcys_lyase"/>
    <property type="match status" value="1"/>
</dbReference>
<dbReference type="PIRSF" id="PIRSF036292">
    <property type="entry name" value="Prenylcysteine_oxidase"/>
    <property type="match status" value="1"/>
</dbReference>
<dbReference type="SUPFAM" id="SSF51905">
    <property type="entry name" value="FAD/NAD(P)-binding domain"/>
    <property type="match status" value="1"/>
</dbReference>
<sequence>MGRFAAALVGSLFWLGLLLCGLGSLASAEPRAPPNRIAIVGAGIGGTSSAYYLRKKFGKDVKIDVFEREEVGGRLATLKVQGHDYEAGGSVIHPLNLHMKRFVKELGLSSVPASGGLVGVYNGKSLVFEESSWFVINVIKLVWRYGFQSLRMHMWVEDLLDKFMRIYRYQSHDYAFSSVEKLMHAIGGDDYVRLLNQTLRENLKKAGFSETFLNEMIAPVMKVNYGQSTDINAFVGAVSLTAADSNLWAVEGGNKIVCSGLLQASSSNLISGSVMSIEEKTRTKQTGNPTKMYEVVYKTGSETHSDFYDIVLVAAPLNRKMSNITFRNFDPPIEEFNDPYQQLVTTFIKGELNSTLFSSRPKDQFGLSAILVTDDSDMFINSLSIVASVRQKEGPPPAVDGMHVWKTFSRDILTKEQISKLFLSYDYAVRKPWLSYPHYEPPQKCPSIILHDRLYYLNGIEFAASCMEMSAIAGYNAALLAYHRWNGNEDMIDQDDLYERLKTEL</sequence>
<protein>
    <recommendedName>
        <fullName evidence="9">Prenylcysteine oxidase 1</fullName>
        <ecNumber evidence="2">1.8.3.5</ecNumber>
    </recommendedName>
    <alternativeName>
        <fullName evidence="7">Prenylcysteine lyase</fullName>
    </alternativeName>
</protein>
<name>PCYOX_MOUSE</name>
<feature type="signal peptide" evidence="3">
    <location>
        <begin position="1"/>
        <end position="28"/>
    </location>
</feature>
<feature type="chain" id="PRO_0000023300" description="Prenylcysteine oxidase 1">
    <location>
        <begin position="29"/>
        <end position="505"/>
    </location>
</feature>
<feature type="glycosylation site" description="N-linked (GlcNAc...) asparagine" evidence="5">
    <location>
        <position position="196"/>
    </location>
</feature>
<feature type="glycosylation site" description="N-linked (GlcNAc...) asparagine" evidence="3">
    <location>
        <position position="323"/>
    </location>
</feature>
<feature type="glycosylation site" description="N-linked (GlcNAc...) asparagine" evidence="6">
    <location>
        <position position="353"/>
    </location>
</feature>
<feature type="sequence conflict" description="In Ref. 1; BAC28252." evidence="9" ref="1">
    <original>S</original>
    <variation>T</variation>
    <location>
        <position position="114"/>
    </location>
</feature>
<accession>Q9CQF9</accession>
<accession>Q3UHV6</accession>
<accession>Q69ZW0</accession>
<accession>Q8BZX1</accession>
<organism>
    <name type="scientific">Mus musculus</name>
    <name type="common">Mouse</name>
    <dbReference type="NCBI Taxonomy" id="10090"/>
    <lineage>
        <taxon>Eukaryota</taxon>
        <taxon>Metazoa</taxon>
        <taxon>Chordata</taxon>
        <taxon>Craniata</taxon>
        <taxon>Vertebrata</taxon>
        <taxon>Euteleostomi</taxon>
        <taxon>Mammalia</taxon>
        <taxon>Eutheria</taxon>
        <taxon>Euarchontoglires</taxon>
        <taxon>Glires</taxon>
        <taxon>Rodentia</taxon>
        <taxon>Myomorpha</taxon>
        <taxon>Muroidea</taxon>
        <taxon>Muridae</taxon>
        <taxon>Murinae</taxon>
        <taxon>Mus</taxon>
        <taxon>Mus</taxon>
    </lineage>
</organism>
<comment type="function">
    <text evidence="1 4">Prenylcysteine oxidase that cleaves the thioether bond of prenyl-L-cysteines, such as farnesylcysteine and geranylgeranylcysteine (PubMed:12151402). Only active against free prenylcysteines and not prenylcysteine residues within prenylated proteins or peptides (By similarity). Involved in the final step in the degradation of prenylated proteins, by degrading prenylcysteines after the protein has been degraded (PubMed:12151402).</text>
</comment>
<comment type="catalytic activity">
    <reaction evidence="2">
        <text>an S-polyprenyl-L-cysteine + O2 + H2O = a polyprenal + L-cysteine + H2O2</text>
        <dbReference type="Rhea" id="RHEA:53892"/>
        <dbReference type="Rhea" id="RHEA-COMP:13675"/>
        <dbReference type="Rhea" id="RHEA-COMP:13676"/>
        <dbReference type="ChEBI" id="CHEBI:15377"/>
        <dbReference type="ChEBI" id="CHEBI:15379"/>
        <dbReference type="ChEBI" id="CHEBI:16240"/>
        <dbReference type="ChEBI" id="CHEBI:35235"/>
        <dbReference type="ChEBI" id="CHEBI:137934"/>
        <dbReference type="ChEBI" id="CHEBI:137935"/>
        <dbReference type="EC" id="1.8.3.5"/>
    </reaction>
    <physiologicalReaction direction="left-to-right" evidence="2">
        <dbReference type="Rhea" id="RHEA:53893"/>
    </physiologicalReaction>
</comment>
<comment type="catalytic activity">
    <reaction evidence="2">
        <text>S-(2E,6E)-farnesyl-L-cysteine + O2 + H2O = (2E,6E)-farnesal + L-cysteine + H2O2</text>
        <dbReference type="Rhea" id="RHEA:30231"/>
        <dbReference type="ChEBI" id="CHEBI:15377"/>
        <dbReference type="ChEBI" id="CHEBI:15379"/>
        <dbReference type="ChEBI" id="CHEBI:15894"/>
        <dbReference type="ChEBI" id="CHEBI:16240"/>
        <dbReference type="ChEBI" id="CHEBI:35235"/>
        <dbReference type="ChEBI" id="CHEBI:62141"/>
        <dbReference type="EC" id="1.8.3.5"/>
    </reaction>
    <physiologicalReaction direction="left-to-right" evidence="2">
        <dbReference type="Rhea" id="RHEA:30232"/>
    </physiologicalReaction>
</comment>
<comment type="catalytic activity">
    <reaction evidence="2">
        <text>[(2E,6E,10E)-geranylgeranyl]-L-cysteine + O2 + H2O = (2E,6E,10E)-geranylgeranial + L-cysteine + H2O2</text>
        <dbReference type="Rhea" id="RHEA:70407"/>
        <dbReference type="ChEBI" id="CHEBI:15377"/>
        <dbReference type="ChEBI" id="CHEBI:15379"/>
        <dbReference type="ChEBI" id="CHEBI:16240"/>
        <dbReference type="ChEBI" id="CHEBI:35235"/>
        <dbReference type="ChEBI" id="CHEBI:189549"/>
        <dbReference type="ChEBI" id="CHEBI:189554"/>
        <dbReference type="EC" id="1.8.3.5"/>
    </reaction>
    <physiologicalReaction direction="left-to-right" evidence="2">
        <dbReference type="Rhea" id="RHEA:70408"/>
    </physiologicalReaction>
</comment>
<comment type="cofactor">
    <cofactor evidence="2">
        <name>FAD</name>
        <dbReference type="ChEBI" id="CHEBI:57692"/>
    </cofactor>
</comment>
<comment type="subcellular location">
    <subcellularLocation>
        <location evidence="2">Lysosome</location>
    </subcellularLocation>
</comment>
<comment type="tissue specificity">
    <text evidence="4">Highly expressed in the liver, kidney, heart and brain.</text>
</comment>
<comment type="disruption phenotype">
    <text evidence="4">Mice are healthy and fertile, but show an accumulation of prenylcysteines within cells (PubMed:12151402). Significant accumulation of both farnesylcysteine and geranylgeranylcysteine in the brain and liver (PubMed:12151402).</text>
</comment>
<comment type="similarity">
    <text evidence="9">Belongs to the prenylcysteine oxidase family.</text>
</comment>
<gene>
    <name evidence="10" type="primary">Pcyox1</name>
    <name evidence="8" type="synonym">Kiaa0908</name>
    <name evidence="7" type="synonym">Pcly</name>
</gene>
<reference key="1">
    <citation type="journal article" date="2005" name="Science">
        <title>The transcriptional landscape of the mammalian genome.</title>
        <authorList>
            <person name="Carninci P."/>
            <person name="Kasukawa T."/>
            <person name="Katayama S."/>
            <person name="Gough J."/>
            <person name="Frith M.C."/>
            <person name="Maeda N."/>
            <person name="Oyama R."/>
            <person name="Ravasi T."/>
            <person name="Lenhard B."/>
            <person name="Wells C."/>
            <person name="Kodzius R."/>
            <person name="Shimokawa K."/>
            <person name="Bajic V.B."/>
            <person name="Brenner S.E."/>
            <person name="Batalov S."/>
            <person name="Forrest A.R."/>
            <person name="Zavolan M."/>
            <person name="Davis M.J."/>
            <person name="Wilming L.G."/>
            <person name="Aidinis V."/>
            <person name="Allen J.E."/>
            <person name="Ambesi-Impiombato A."/>
            <person name="Apweiler R."/>
            <person name="Aturaliya R.N."/>
            <person name="Bailey T.L."/>
            <person name="Bansal M."/>
            <person name="Baxter L."/>
            <person name="Beisel K.W."/>
            <person name="Bersano T."/>
            <person name="Bono H."/>
            <person name="Chalk A.M."/>
            <person name="Chiu K.P."/>
            <person name="Choudhary V."/>
            <person name="Christoffels A."/>
            <person name="Clutterbuck D.R."/>
            <person name="Crowe M.L."/>
            <person name="Dalla E."/>
            <person name="Dalrymple B.P."/>
            <person name="de Bono B."/>
            <person name="Della Gatta G."/>
            <person name="di Bernardo D."/>
            <person name="Down T."/>
            <person name="Engstrom P."/>
            <person name="Fagiolini M."/>
            <person name="Faulkner G."/>
            <person name="Fletcher C.F."/>
            <person name="Fukushima T."/>
            <person name="Furuno M."/>
            <person name="Futaki S."/>
            <person name="Gariboldi M."/>
            <person name="Georgii-Hemming P."/>
            <person name="Gingeras T.R."/>
            <person name="Gojobori T."/>
            <person name="Green R.E."/>
            <person name="Gustincich S."/>
            <person name="Harbers M."/>
            <person name="Hayashi Y."/>
            <person name="Hensch T.K."/>
            <person name="Hirokawa N."/>
            <person name="Hill D."/>
            <person name="Huminiecki L."/>
            <person name="Iacono M."/>
            <person name="Ikeo K."/>
            <person name="Iwama A."/>
            <person name="Ishikawa T."/>
            <person name="Jakt M."/>
            <person name="Kanapin A."/>
            <person name="Katoh M."/>
            <person name="Kawasawa Y."/>
            <person name="Kelso J."/>
            <person name="Kitamura H."/>
            <person name="Kitano H."/>
            <person name="Kollias G."/>
            <person name="Krishnan S.P."/>
            <person name="Kruger A."/>
            <person name="Kummerfeld S.K."/>
            <person name="Kurochkin I.V."/>
            <person name="Lareau L.F."/>
            <person name="Lazarevic D."/>
            <person name="Lipovich L."/>
            <person name="Liu J."/>
            <person name="Liuni S."/>
            <person name="McWilliam S."/>
            <person name="Madan Babu M."/>
            <person name="Madera M."/>
            <person name="Marchionni L."/>
            <person name="Matsuda H."/>
            <person name="Matsuzawa S."/>
            <person name="Miki H."/>
            <person name="Mignone F."/>
            <person name="Miyake S."/>
            <person name="Morris K."/>
            <person name="Mottagui-Tabar S."/>
            <person name="Mulder N."/>
            <person name="Nakano N."/>
            <person name="Nakauchi H."/>
            <person name="Ng P."/>
            <person name="Nilsson R."/>
            <person name="Nishiguchi S."/>
            <person name="Nishikawa S."/>
            <person name="Nori F."/>
            <person name="Ohara O."/>
            <person name="Okazaki Y."/>
            <person name="Orlando V."/>
            <person name="Pang K.C."/>
            <person name="Pavan W.J."/>
            <person name="Pavesi G."/>
            <person name="Pesole G."/>
            <person name="Petrovsky N."/>
            <person name="Piazza S."/>
            <person name="Reed J."/>
            <person name="Reid J.F."/>
            <person name="Ring B.Z."/>
            <person name="Ringwald M."/>
            <person name="Rost B."/>
            <person name="Ruan Y."/>
            <person name="Salzberg S.L."/>
            <person name="Sandelin A."/>
            <person name="Schneider C."/>
            <person name="Schoenbach C."/>
            <person name="Sekiguchi K."/>
            <person name="Semple C.A."/>
            <person name="Seno S."/>
            <person name="Sessa L."/>
            <person name="Sheng Y."/>
            <person name="Shibata Y."/>
            <person name="Shimada H."/>
            <person name="Shimada K."/>
            <person name="Silva D."/>
            <person name="Sinclair B."/>
            <person name="Sperling S."/>
            <person name="Stupka E."/>
            <person name="Sugiura K."/>
            <person name="Sultana R."/>
            <person name="Takenaka Y."/>
            <person name="Taki K."/>
            <person name="Tammoja K."/>
            <person name="Tan S.L."/>
            <person name="Tang S."/>
            <person name="Taylor M.S."/>
            <person name="Tegner J."/>
            <person name="Teichmann S.A."/>
            <person name="Ueda H.R."/>
            <person name="van Nimwegen E."/>
            <person name="Verardo R."/>
            <person name="Wei C.L."/>
            <person name="Yagi K."/>
            <person name="Yamanishi H."/>
            <person name="Zabarovsky E."/>
            <person name="Zhu S."/>
            <person name="Zimmer A."/>
            <person name="Hide W."/>
            <person name="Bult C."/>
            <person name="Grimmond S.M."/>
            <person name="Teasdale R.D."/>
            <person name="Liu E.T."/>
            <person name="Brusic V."/>
            <person name="Quackenbush J."/>
            <person name="Wahlestedt C."/>
            <person name="Mattick J.S."/>
            <person name="Hume D.A."/>
            <person name="Kai C."/>
            <person name="Sasaki D."/>
            <person name="Tomaru Y."/>
            <person name="Fukuda S."/>
            <person name="Kanamori-Katayama M."/>
            <person name="Suzuki M."/>
            <person name="Aoki J."/>
            <person name="Arakawa T."/>
            <person name="Iida J."/>
            <person name="Imamura K."/>
            <person name="Itoh M."/>
            <person name="Kato T."/>
            <person name="Kawaji H."/>
            <person name="Kawagashira N."/>
            <person name="Kawashima T."/>
            <person name="Kojima M."/>
            <person name="Kondo S."/>
            <person name="Konno H."/>
            <person name="Nakano K."/>
            <person name="Ninomiya N."/>
            <person name="Nishio T."/>
            <person name="Okada M."/>
            <person name="Plessy C."/>
            <person name="Shibata K."/>
            <person name="Shiraki T."/>
            <person name="Suzuki S."/>
            <person name="Tagami M."/>
            <person name="Waki K."/>
            <person name="Watahiki A."/>
            <person name="Okamura-Oho Y."/>
            <person name="Suzuki H."/>
            <person name="Kawai J."/>
            <person name="Hayashizaki Y."/>
        </authorList>
    </citation>
    <scope>NUCLEOTIDE SEQUENCE [LARGE SCALE MRNA]</scope>
    <source>
        <strain>C57BL/6J</strain>
        <tissue>Amnion</tissue>
        <tissue>Liver</tissue>
        <tissue>Lung</tissue>
        <tissue>Testis</tissue>
    </source>
</reference>
<reference key="2">
    <citation type="journal article" date="2004" name="Genome Res.">
        <title>The status, quality, and expansion of the NIH full-length cDNA project: the Mammalian Gene Collection (MGC).</title>
        <authorList>
            <consortium name="The MGC Project Team"/>
        </authorList>
    </citation>
    <scope>NUCLEOTIDE SEQUENCE [LARGE SCALE MRNA]</scope>
    <source>
        <strain>FVB/N</strain>
        <tissue>Mammary tumor</tissue>
    </source>
</reference>
<reference key="3">
    <citation type="journal article" date="2004" name="DNA Res.">
        <title>Prediction of the coding sequences of mouse homologues of KIAA gene: IV. The complete nucleotide sequences of 500 mouse KIAA-homologous cDNAs identified by screening of terminal sequences of cDNA clones randomly sampled from size-fractionated libraries.</title>
        <authorList>
            <person name="Okazaki N."/>
            <person name="Kikuno R."/>
            <person name="Ohara R."/>
            <person name="Inamoto S."/>
            <person name="Koseki H."/>
            <person name="Hiraoka S."/>
            <person name="Saga Y."/>
            <person name="Seino S."/>
            <person name="Nishimura M."/>
            <person name="Kaisho T."/>
            <person name="Hoshino K."/>
            <person name="Kitamura H."/>
            <person name="Nagase T."/>
            <person name="Ohara O."/>
            <person name="Koga H."/>
        </authorList>
    </citation>
    <scope>NUCLEOTIDE SEQUENCE [LARGE SCALE MRNA] OF 5-505</scope>
    <source>
        <tissue>Fetal brain</tissue>
    </source>
</reference>
<reference key="4">
    <citation type="submission" date="2007-04" db="UniProtKB">
        <authorList>
            <person name="Lubec G."/>
            <person name="Kang S.U."/>
        </authorList>
    </citation>
    <scope>PROTEIN SEQUENCE OF 145-151; 169-193; 292-298; 328-349 AND 421-430</scope>
    <scope>IDENTIFICATION BY MASS SPECTROMETRY</scope>
    <source>
        <strain>C57BL/6J</strain>
        <tissue>Brain</tissue>
    </source>
</reference>
<reference key="5">
    <citation type="journal article" date="2002" name="J. Biol. Chem.">
        <title>Prenylcysteine lyase deficiency in mice results in the accumulation of farnesylcysteine and geranylgeranylcysteine in brain and liver.</title>
        <authorList>
            <person name="Beigneux A."/>
            <person name="Withycombe S.K."/>
            <person name="Digits J.A."/>
            <person name="Tschantz W.R."/>
            <person name="Weinbaum C.A."/>
            <person name="Griffey S.M."/>
            <person name="Bergo M."/>
            <person name="Casey P.J."/>
            <person name="Young S.G."/>
        </authorList>
    </citation>
    <scope>FUNCTION</scope>
    <scope>TISSUE SPECIFICITY</scope>
    <scope>DISRUPTION PHENOTYPE</scope>
</reference>
<reference key="6">
    <citation type="journal article" date="2006" name="J. Proteome Res.">
        <title>Proteome-wide characterization of N-glycosylation events by diagonal chromatography.</title>
        <authorList>
            <person name="Ghesquiere B."/>
            <person name="Van Damme J."/>
            <person name="Martens L."/>
            <person name="Vandekerckhove J."/>
            <person name="Gevaert K."/>
        </authorList>
    </citation>
    <scope>GLYCOSYLATION [LARGE SCALE ANALYSIS] AT ASN-196</scope>
    <source>
        <strain>C57BL/6J</strain>
        <tissue>Plasma</tissue>
    </source>
</reference>
<reference key="7">
    <citation type="journal article" date="2009" name="Nat. Biotechnol.">
        <title>Mass-spectrometric identification and relative quantification of N-linked cell surface glycoproteins.</title>
        <authorList>
            <person name="Wollscheid B."/>
            <person name="Bausch-Fluck D."/>
            <person name="Henderson C."/>
            <person name="O'Brien R."/>
            <person name="Bibel M."/>
            <person name="Schiess R."/>
            <person name="Aebersold R."/>
            <person name="Watts J.D."/>
        </authorList>
    </citation>
    <scope>GLYCOSYLATION [LARGE SCALE ANALYSIS] AT ASN-353</scope>
</reference>
<reference key="8">
    <citation type="journal article" date="2010" name="Cell">
        <title>A tissue-specific atlas of mouse protein phosphorylation and expression.</title>
        <authorList>
            <person name="Huttlin E.L."/>
            <person name="Jedrychowski M.P."/>
            <person name="Elias J.E."/>
            <person name="Goswami T."/>
            <person name="Rad R."/>
            <person name="Beausoleil S.A."/>
            <person name="Villen J."/>
            <person name="Haas W."/>
            <person name="Sowa M.E."/>
            <person name="Gygi S.P."/>
        </authorList>
    </citation>
    <scope>IDENTIFICATION BY MASS SPECTROMETRY [LARGE SCALE ANALYSIS]</scope>
    <source>
        <tissue>Brain</tissue>
        <tissue>Brown adipose tissue</tissue>
        <tissue>Heart</tissue>
        <tissue>Kidney</tissue>
        <tissue>Liver</tissue>
        <tissue>Lung</tissue>
        <tissue>Pancreas</tissue>
        <tissue>Spleen</tissue>
        <tissue>Testis</tissue>
    </source>
</reference>
<evidence type="ECO:0000250" key="1">
    <source>
        <dbReference type="UniProtKB" id="F1N2K1"/>
    </source>
</evidence>
<evidence type="ECO:0000250" key="2">
    <source>
        <dbReference type="UniProtKB" id="Q9UHG3"/>
    </source>
</evidence>
<evidence type="ECO:0000255" key="3"/>
<evidence type="ECO:0000269" key="4">
    <source>
    </source>
</evidence>
<evidence type="ECO:0000269" key="5">
    <source>
    </source>
</evidence>
<evidence type="ECO:0000269" key="6">
    <source>
    </source>
</evidence>
<evidence type="ECO:0000303" key="7">
    <source>
    </source>
</evidence>
<evidence type="ECO:0000303" key="8">
    <source>
    </source>
</evidence>
<evidence type="ECO:0000305" key="9"/>
<evidence type="ECO:0000312" key="10">
    <source>
        <dbReference type="MGI" id="MGI:1914131"/>
    </source>
</evidence>